<reference key="1">
    <citation type="submission" date="2006-06" db="EMBL/GenBank/DDBJ databases">
        <title>Complete sequence of Pseudoalteromonas atlantica T6c.</title>
        <authorList>
            <consortium name="US DOE Joint Genome Institute"/>
            <person name="Copeland A."/>
            <person name="Lucas S."/>
            <person name="Lapidus A."/>
            <person name="Barry K."/>
            <person name="Detter J.C."/>
            <person name="Glavina del Rio T."/>
            <person name="Hammon N."/>
            <person name="Israni S."/>
            <person name="Dalin E."/>
            <person name="Tice H."/>
            <person name="Pitluck S."/>
            <person name="Saunders E."/>
            <person name="Brettin T."/>
            <person name="Bruce D."/>
            <person name="Han C."/>
            <person name="Tapia R."/>
            <person name="Gilna P."/>
            <person name="Schmutz J."/>
            <person name="Larimer F."/>
            <person name="Land M."/>
            <person name="Hauser L."/>
            <person name="Kyrpides N."/>
            <person name="Kim E."/>
            <person name="Karls A.C."/>
            <person name="Bartlett D."/>
            <person name="Higgins B.P."/>
            <person name="Richardson P."/>
        </authorList>
    </citation>
    <scope>NUCLEOTIDE SEQUENCE [LARGE SCALE GENOMIC DNA]</scope>
    <source>
        <strain>T6c / ATCC BAA-1087</strain>
    </source>
</reference>
<feature type="chain" id="PRO_1000050247" description="4-hydroxy-tetrahydrodipicolinate synthase">
    <location>
        <begin position="1"/>
        <end position="293"/>
    </location>
</feature>
<feature type="active site" description="Proton donor/acceptor" evidence="1">
    <location>
        <position position="133"/>
    </location>
</feature>
<feature type="active site" description="Schiff-base intermediate with substrate" evidence="1">
    <location>
        <position position="161"/>
    </location>
</feature>
<feature type="binding site" evidence="1">
    <location>
        <position position="45"/>
    </location>
    <ligand>
        <name>pyruvate</name>
        <dbReference type="ChEBI" id="CHEBI:15361"/>
    </ligand>
</feature>
<feature type="binding site" evidence="1">
    <location>
        <position position="203"/>
    </location>
    <ligand>
        <name>pyruvate</name>
        <dbReference type="ChEBI" id="CHEBI:15361"/>
    </ligand>
</feature>
<feature type="site" description="Part of a proton relay during catalysis" evidence="1">
    <location>
        <position position="44"/>
    </location>
</feature>
<feature type="site" description="Part of a proton relay during catalysis" evidence="1">
    <location>
        <position position="107"/>
    </location>
</feature>
<name>DAPA_PSEA6</name>
<protein>
    <recommendedName>
        <fullName evidence="1">4-hydroxy-tetrahydrodipicolinate synthase</fullName>
        <shortName evidence="1">HTPA synthase</shortName>
        <ecNumber evidence="1">4.3.3.7</ecNumber>
    </recommendedName>
</protein>
<keyword id="KW-0028">Amino-acid biosynthesis</keyword>
<keyword id="KW-0963">Cytoplasm</keyword>
<keyword id="KW-0220">Diaminopimelate biosynthesis</keyword>
<keyword id="KW-0456">Lyase</keyword>
<keyword id="KW-0457">Lysine biosynthesis</keyword>
<keyword id="KW-0704">Schiff base</keyword>
<evidence type="ECO:0000255" key="1">
    <source>
        <dbReference type="HAMAP-Rule" id="MF_00418"/>
    </source>
</evidence>
<evidence type="ECO:0000305" key="2"/>
<accession>Q15SZ4</accession>
<sequence>MFTGSYVALITPMYQSGEIDYPSLKKLVDFHIANGSHGLIAVGTTGESATLPFDEHIEVVKRMVEFADKKIPVIAGSGANSTAEAIFLSEQMAGTGIDGFLSVVPYYNKPQQKGMVAHFNAVADATDLPVLLYNVPGRTVADMLPDTVAELATHPKIVGLKDATGDIARLKQMQPLVDKDFVFLSGDDATGCEFLTAGGHGVISVTANVVPKQMSQMCEAALAGNYSKAKEIDQQIAELHSALFIEPNPVLPKWALYKMGLIQSAFLRLPLIESELDSQNHIEQVMRNSGVLS</sequence>
<comment type="function">
    <text evidence="1">Catalyzes the condensation of (S)-aspartate-beta-semialdehyde [(S)-ASA] and pyruvate to 4-hydroxy-tetrahydrodipicolinate (HTPA).</text>
</comment>
<comment type="catalytic activity">
    <reaction evidence="1">
        <text>L-aspartate 4-semialdehyde + pyruvate = (2S,4S)-4-hydroxy-2,3,4,5-tetrahydrodipicolinate + H2O + H(+)</text>
        <dbReference type="Rhea" id="RHEA:34171"/>
        <dbReference type="ChEBI" id="CHEBI:15361"/>
        <dbReference type="ChEBI" id="CHEBI:15377"/>
        <dbReference type="ChEBI" id="CHEBI:15378"/>
        <dbReference type="ChEBI" id="CHEBI:67139"/>
        <dbReference type="ChEBI" id="CHEBI:537519"/>
        <dbReference type="EC" id="4.3.3.7"/>
    </reaction>
</comment>
<comment type="pathway">
    <text evidence="1">Amino-acid biosynthesis; L-lysine biosynthesis via DAP pathway; (S)-tetrahydrodipicolinate from L-aspartate: step 3/4.</text>
</comment>
<comment type="subunit">
    <text evidence="1">Homotetramer; dimer of dimers.</text>
</comment>
<comment type="subcellular location">
    <subcellularLocation>
        <location evidence="1">Cytoplasm</location>
    </subcellularLocation>
</comment>
<comment type="similarity">
    <text evidence="1">Belongs to the DapA family.</text>
</comment>
<comment type="caution">
    <text evidence="2">Was originally thought to be a dihydrodipicolinate synthase (DHDPS), catalyzing the condensation of (S)-aspartate-beta-semialdehyde [(S)-ASA] and pyruvate to dihydrodipicolinate (DHDP). However, it was shown in E.coli that the product of the enzymatic reaction is not dihydrodipicolinate but in fact (4S)-4-hydroxy-2,3,4,5-tetrahydro-(2S)-dipicolinic acid (HTPA), and that the consecutive dehydration reaction leading to DHDP is not spontaneous but catalyzed by DapB.</text>
</comment>
<gene>
    <name evidence="1" type="primary">dapA</name>
    <name type="ordered locus">Patl_2478</name>
</gene>
<dbReference type="EC" id="4.3.3.7" evidence="1"/>
<dbReference type="EMBL" id="CP000388">
    <property type="protein sequence ID" value="ABG40994.1"/>
    <property type="molecule type" value="Genomic_DNA"/>
</dbReference>
<dbReference type="RefSeq" id="WP_011575265.1">
    <property type="nucleotide sequence ID" value="NC_008228.1"/>
</dbReference>
<dbReference type="SMR" id="Q15SZ4"/>
<dbReference type="STRING" id="342610.Patl_2478"/>
<dbReference type="KEGG" id="pat:Patl_2478"/>
<dbReference type="eggNOG" id="COG0329">
    <property type="taxonomic scope" value="Bacteria"/>
</dbReference>
<dbReference type="HOGENOM" id="CLU_049343_7_1_6"/>
<dbReference type="OrthoDB" id="9782828at2"/>
<dbReference type="UniPathway" id="UPA00034">
    <property type="reaction ID" value="UER00017"/>
</dbReference>
<dbReference type="Proteomes" id="UP000001981">
    <property type="component" value="Chromosome"/>
</dbReference>
<dbReference type="GO" id="GO:0005829">
    <property type="term" value="C:cytosol"/>
    <property type="evidence" value="ECO:0007669"/>
    <property type="project" value="TreeGrafter"/>
</dbReference>
<dbReference type="GO" id="GO:0008840">
    <property type="term" value="F:4-hydroxy-tetrahydrodipicolinate synthase activity"/>
    <property type="evidence" value="ECO:0007669"/>
    <property type="project" value="UniProtKB-UniRule"/>
</dbReference>
<dbReference type="GO" id="GO:0019877">
    <property type="term" value="P:diaminopimelate biosynthetic process"/>
    <property type="evidence" value="ECO:0007669"/>
    <property type="project" value="UniProtKB-UniRule"/>
</dbReference>
<dbReference type="GO" id="GO:0009089">
    <property type="term" value="P:lysine biosynthetic process via diaminopimelate"/>
    <property type="evidence" value="ECO:0007669"/>
    <property type="project" value="UniProtKB-UniRule"/>
</dbReference>
<dbReference type="CDD" id="cd00950">
    <property type="entry name" value="DHDPS"/>
    <property type="match status" value="1"/>
</dbReference>
<dbReference type="Gene3D" id="3.20.20.70">
    <property type="entry name" value="Aldolase class I"/>
    <property type="match status" value="1"/>
</dbReference>
<dbReference type="HAMAP" id="MF_00418">
    <property type="entry name" value="DapA"/>
    <property type="match status" value="1"/>
</dbReference>
<dbReference type="InterPro" id="IPR013785">
    <property type="entry name" value="Aldolase_TIM"/>
</dbReference>
<dbReference type="InterPro" id="IPR005263">
    <property type="entry name" value="DapA"/>
</dbReference>
<dbReference type="InterPro" id="IPR002220">
    <property type="entry name" value="DapA-like"/>
</dbReference>
<dbReference type="InterPro" id="IPR020625">
    <property type="entry name" value="Schiff_base-form_aldolases_AS"/>
</dbReference>
<dbReference type="InterPro" id="IPR020624">
    <property type="entry name" value="Schiff_base-form_aldolases_CS"/>
</dbReference>
<dbReference type="NCBIfam" id="TIGR00674">
    <property type="entry name" value="dapA"/>
    <property type="match status" value="1"/>
</dbReference>
<dbReference type="PANTHER" id="PTHR12128:SF66">
    <property type="entry name" value="4-HYDROXY-2-OXOGLUTARATE ALDOLASE, MITOCHONDRIAL"/>
    <property type="match status" value="1"/>
</dbReference>
<dbReference type="PANTHER" id="PTHR12128">
    <property type="entry name" value="DIHYDRODIPICOLINATE SYNTHASE"/>
    <property type="match status" value="1"/>
</dbReference>
<dbReference type="Pfam" id="PF00701">
    <property type="entry name" value="DHDPS"/>
    <property type="match status" value="1"/>
</dbReference>
<dbReference type="PIRSF" id="PIRSF001365">
    <property type="entry name" value="DHDPS"/>
    <property type="match status" value="1"/>
</dbReference>
<dbReference type="PRINTS" id="PR00146">
    <property type="entry name" value="DHPICSNTHASE"/>
</dbReference>
<dbReference type="SMART" id="SM01130">
    <property type="entry name" value="DHDPS"/>
    <property type="match status" value="1"/>
</dbReference>
<dbReference type="SUPFAM" id="SSF51569">
    <property type="entry name" value="Aldolase"/>
    <property type="match status" value="1"/>
</dbReference>
<dbReference type="PROSITE" id="PS00665">
    <property type="entry name" value="DHDPS_1"/>
    <property type="match status" value="1"/>
</dbReference>
<dbReference type="PROSITE" id="PS00666">
    <property type="entry name" value="DHDPS_2"/>
    <property type="match status" value="1"/>
</dbReference>
<organism>
    <name type="scientific">Pseudoalteromonas atlantica (strain T6c / ATCC BAA-1087)</name>
    <dbReference type="NCBI Taxonomy" id="3042615"/>
    <lineage>
        <taxon>Bacteria</taxon>
        <taxon>Pseudomonadati</taxon>
        <taxon>Pseudomonadota</taxon>
        <taxon>Gammaproteobacteria</taxon>
        <taxon>Alteromonadales</taxon>
        <taxon>Alteromonadaceae</taxon>
        <taxon>Paraglaciecola</taxon>
    </lineage>
</organism>
<proteinExistence type="inferred from homology"/>